<accession>P42626</accession>
<accession>P42627</accession>
<accession>Q2M998</accession>
<accession>Q6BF47</accession>
<dbReference type="EMBL" id="U18997">
    <property type="protein sequence ID" value="AAA57912.1"/>
    <property type="status" value="ALT_FRAME"/>
    <property type="molecule type" value="Genomic_DNA"/>
</dbReference>
<dbReference type="EMBL" id="U18997">
    <property type="protein sequence ID" value="AAA57913.1"/>
    <property type="status" value="ALT_FRAME"/>
    <property type="molecule type" value="Genomic_DNA"/>
</dbReference>
<dbReference type="EMBL" id="U00096">
    <property type="protein sequence ID" value="AAT48167.1"/>
    <property type="molecule type" value="Genomic_DNA"/>
</dbReference>
<dbReference type="EMBL" id="AP009048">
    <property type="protein sequence ID" value="BAE77158.1"/>
    <property type="molecule type" value="Genomic_DNA"/>
</dbReference>
<dbReference type="RefSeq" id="YP_026202.1">
    <property type="nucleotide sequence ID" value="NC_000913.3"/>
</dbReference>
<dbReference type="SMR" id="P42626"/>
<dbReference type="BioGRID" id="4259262">
    <property type="interactions" value="22"/>
</dbReference>
<dbReference type="FunCoup" id="P42626">
    <property type="interactions" value="144"/>
</dbReference>
<dbReference type="STRING" id="511145.b4470"/>
<dbReference type="PaxDb" id="511145-b4470"/>
<dbReference type="EnsemblBacteria" id="AAT48167">
    <property type="protein sequence ID" value="AAT48167"/>
    <property type="gene ID" value="b4470"/>
</dbReference>
<dbReference type="GeneID" id="2847723"/>
<dbReference type="KEGG" id="ecj:JW5518"/>
<dbReference type="KEGG" id="eco:b4470"/>
<dbReference type="KEGG" id="ecoc:C3026_16965"/>
<dbReference type="PATRIC" id="fig|511145.12.peg.3204"/>
<dbReference type="EchoBASE" id="EB2608"/>
<dbReference type="eggNOG" id="COG3681">
    <property type="taxonomic scope" value="Bacteria"/>
</dbReference>
<dbReference type="HOGENOM" id="CLU_051840_0_0_6"/>
<dbReference type="InParanoid" id="P42626"/>
<dbReference type="OMA" id="MIPVMSN"/>
<dbReference type="OrthoDB" id="41906at2"/>
<dbReference type="PhylomeDB" id="P42626"/>
<dbReference type="BioCyc" id="EcoCyc:G7622-MONOMER"/>
<dbReference type="BioCyc" id="MetaCyc:G7622-MONOMER"/>
<dbReference type="PRO" id="PR:P42626"/>
<dbReference type="Proteomes" id="UP000000625">
    <property type="component" value="Chromosome"/>
</dbReference>
<dbReference type="GO" id="GO:0080146">
    <property type="term" value="F:L-cysteine desulfhydrase activity"/>
    <property type="evidence" value="ECO:0000314"/>
    <property type="project" value="EcoCyc"/>
</dbReference>
<dbReference type="GO" id="GO:0009093">
    <property type="term" value="P:cysteine catabolic process"/>
    <property type="evidence" value="ECO:0000315"/>
    <property type="project" value="UniProtKB"/>
</dbReference>
<dbReference type="GO" id="GO:0019450">
    <property type="term" value="P:L-cysteine catabolic process to pyruvate"/>
    <property type="evidence" value="ECO:0000314"/>
    <property type="project" value="EcoCyc"/>
</dbReference>
<dbReference type="GO" id="GO:1901367">
    <property type="term" value="P:response to L-cysteine"/>
    <property type="evidence" value="ECO:0000314"/>
    <property type="project" value="EcoCyc"/>
</dbReference>
<dbReference type="HAMAP" id="MF_01845">
    <property type="entry name" value="UPF0597"/>
    <property type="match status" value="1"/>
</dbReference>
<dbReference type="InterPro" id="IPR005130">
    <property type="entry name" value="Ser_deHydtase-like_asu"/>
</dbReference>
<dbReference type="InterPro" id="IPR021144">
    <property type="entry name" value="UPF0597"/>
</dbReference>
<dbReference type="PANTHER" id="PTHR30501">
    <property type="entry name" value="UPF0597 PROTEIN YHAM"/>
    <property type="match status" value="1"/>
</dbReference>
<dbReference type="PANTHER" id="PTHR30501:SF2">
    <property type="entry name" value="UPF0597 PROTEIN YHAM"/>
    <property type="match status" value="1"/>
</dbReference>
<dbReference type="Pfam" id="PF03313">
    <property type="entry name" value="SDH_alpha"/>
    <property type="match status" value="1"/>
</dbReference>
<dbReference type="PIRSF" id="PIRSF006054">
    <property type="entry name" value="UCP006054"/>
    <property type="match status" value="1"/>
</dbReference>
<reference key="1">
    <citation type="journal article" date="1997" name="Science">
        <title>The complete genome sequence of Escherichia coli K-12.</title>
        <authorList>
            <person name="Blattner F.R."/>
            <person name="Plunkett G. III"/>
            <person name="Bloch C.A."/>
            <person name="Perna N.T."/>
            <person name="Burland V."/>
            <person name="Riley M."/>
            <person name="Collado-Vides J."/>
            <person name="Glasner J.D."/>
            <person name="Rode C.K."/>
            <person name="Mayhew G.F."/>
            <person name="Gregor J."/>
            <person name="Davis N.W."/>
            <person name="Kirkpatrick H.A."/>
            <person name="Goeden M.A."/>
            <person name="Rose D.J."/>
            <person name="Mau B."/>
            <person name="Shao Y."/>
        </authorList>
    </citation>
    <scope>NUCLEOTIDE SEQUENCE [LARGE SCALE GENOMIC DNA]</scope>
    <source>
        <strain>K12 / MG1655 / ATCC 47076</strain>
    </source>
</reference>
<reference key="2">
    <citation type="journal article" date="2006" name="Nucleic Acids Res.">
        <title>Escherichia coli K-12: a cooperatively developed annotation snapshot -- 2005.</title>
        <authorList>
            <person name="Riley M."/>
            <person name="Abe T."/>
            <person name="Arnaud M.B."/>
            <person name="Berlyn M.K.B."/>
            <person name="Blattner F.R."/>
            <person name="Chaudhuri R.R."/>
            <person name="Glasner J.D."/>
            <person name="Horiuchi T."/>
            <person name="Keseler I.M."/>
            <person name="Kosuge T."/>
            <person name="Mori H."/>
            <person name="Perna N.T."/>
            <person name="Plunkett G. III"/>
            <person name="Rudd K.E."/>
            <person name="Serres M.H."/>
            <person name="Thomas G.H."/>
            <person name="Thomson N.R."/>
            <person name="Wishart D."/>
            <person name="Wanner B.L."/>
        </authorList>
    </citation>
    <scope>SEQUENCE REVISION</scope>
</reference>
<reference key="3">
    <citation type="journal article" date="2006" name="Mol. Syst. Biol.">
        <title>Highly accurate genome sequences of Escherichia coli K-12 strains MG1655 and W3110.</title>
        <authorList>
            <person name="Hayashi K."/>
            <person name="Morooka N."/>
            <person name="Yamamoto Y."/>
            <person name="Fujita K."/>
            <person name="Isono K."/>
            <person name="Choi S."/>
            <person name="Ohtsubo E."/>
            <person name="Baba T."/>
            <person name="Wanner B.L."/>
            <person name="Mori H."/>
            <person name="Horiuchi T."/>
        </authorList>
    </citation>
    <scope>NUCLEOTIDE SEQUENCE [LARGE SCALE GENOMIC DNA]</scope>
    <source>
        <strain>K12 / W3110 / ATCC 27325 / DSM 5911</strain>
    </source>
</reference>
<reference key="4">
    <citation type="journal article" date="2016" name="Microbiology">
        <title>Transcription factor DecR (YbaO) controls detoxification of L-cysteine in Escherichia coli.</title>
        <authorList>
            <person name="Shimada T."/>
            <person name="Tanaka K."/>
            <person name="Ishihama A."/>
        </authorList>
    </citation>
    <scope>POSSIBLE FUNCTION</scope>
    <scope>INDUCTION BY CYSTEINE</scope>
    <scope>OPERON</scope>
    <scope>DISRUPTION PHENOTYPE</scope>
    <source>
        <strain>K12 / BW25113</strain>
    </source>
</reference>
<name>YHAM_ECOLI</name>
<feature type="chain" id="PRO_0000169448" description="UPF0597 protein YhaM">
    <location>
        <begin position="1"/>
        <end position="436"/>
    </location>
</feature>
<keyword id="KW-1185">Reference proteome</keyword>
<protein>
    <recommendedName>
        <fullName evidence="1">UPF0597 protein YhaM</fullName>
    </recommendedName>
</protein>
<sequence>MFDSTLNPLWQRYILAVQEEVKPALGCTEPISLALAAAVAAAELEGPVERVEAWVSPNLMKNGLGVTVPGTGMVGLPIAAALGALGGNANAGLEVLKDATAQAIADAKALLAAGKVSVKIQEPCDEILFSRAKVWNGEKWACVTIVGGHTNIVHIETHDGVVFTQQACVAEGEQESPLTVLSRTTLAEILKFVNEVPFAAIRFILDSAKLNCALSQEGLSGKWGLHIGATLEKQCERGLLAKDLSSSIVIRTSAASDARMGGATLPAMSNSGSGNQGITATMPVVVVAEHFGADDERLARALMLSHLSAIYIHNQLPRLSALCAATTAAMGAAAGMAWLVDGRYETISMAISSMIGDVSGMICDGASNSCAMKVSTSASAAWKAVLMALDDTAVTGNEGIVAHDVEQSIANLCALASHSMQQTDRQIIEIMASKAR</sequence>
<proteinExistence type="evidence at transcript level"/>
<gene>
    <name evidence="1" type="primary">yhaM</name>
    <name type="synonym">yhaN</name>
    <name type="ordered locus">b4470</name>
    <name type="ordered locus">JW5518</name>
</gene>
<organism>
    <name type="scientific">Escherichia coli (strain K12)</name>
    <dbReference type="NCBI Taxonomy" id="83333"/>
    <lineage>
        <taxon>Bacteria</taxon>
        <taxon>Pseudomonadati</taxon>
        <taxon>Pseudomonadota</taxon>
        <taxon>Gammaproteobacteria</taxon>
        <taxon>Enterobacterales</taxon>
        <taxon>Enterobacteriaceae</taxon>
        <taxon>Escherichia</taxon>
    </lineage>
</organism>
<comment type="function">
    <text evidence="4">Plays a role in L-cysteine detoxification; it has been speculated to be a cysteine desulfhydrase (PubMed:27435271).</text>
</comment>
<comment type="induction">
    <text evidence="2">Transcription induced by L-cysteine (in vivo), under control of DecR. Member of the dlsT(yhaO)-yhaM operon.</text>
</comment>
<comment type="disruption phenotype">
    <text evidence="3">Slightly increased sensitivity to excess L-cysteine, the effect is more pronounced in M9 minimal medium. Cells produce about 9% of wild-type levels of hydrogen sulfide in the presence of excess cysteine.</text>
</comment>
<comment type="similarity">
    <text evidence="1">Belongs to the UPF0597 family.</text>
</comment>
<comment type="sequence caution" evidence="5">
    <conflict type="frameshift">
        <sequence resource="EMBL-CDS" id="AAA57912"/>
    </conflict>
</comment>
<comment type="sequence caution" evidence="5">
    <conflict type="frameshift">
        <sequence resource="EMBL-CDS" id="AAA57913"/>
    </conflict>
</comment>
<evidence type="ECO:0000255" key="1">
    <source>
        <dbReference type="HAMAP-Rule" id="MF_01845"/>
    </source>
</evidence>
<evidence type="ECO:0000269" key="2">
    <source>
    </source>
</evidence>
<evidence type="ECO:0000269" key="3">
    <source>
    </source>
</evidence>
<evidence type="ECO:0000303" key="4">
    <source>
    </source>
</evidence>
<evidence type="ECO:0000305" key="5"/>